<evidence type="ECO:0000250" key="1"/>
<evidence type="ECO:0000250" key="2">
    <source>
        <dbReference type="UniProtKB" id="P00157"/>
    </source>
</evidence>
<evidence type="ECO:0000255" key="3">
    <source>
        <dbReference type="PROSITE-ProRule" id="PRU00967"/>
    </source>
</evidence>
<evidence type="ECO:0000255" key="4">
    <source>
        <dbReference type="PROSITE-ProRule" id="PRU00968"/>
    </source>
</evidence>
<proteinExistence type="inferred from homology"/>
<protein>
    <recommendedName>
        <fullName>Cytochrome b</fullName>
    </recommendedName>
    <alternativeName>
        <fullName>Complex III subunit 3</fullName>
    </alternativeName>
    <alternativeName>
        <fullName>Complex III subunit III</fullName>
    </alternativeName>
    <alternativeName>
        <fullName>Cytochrome b-c1 complex subunit 3</fullName>
    </alternativeName>
    <alternativeName>
        <fullName>Ubiquinol-cytochrome-c reductase complex cytochrome b subunit</fullName>
    </alternativeName>
</protein>
<gene>
    <name type="primary">MT-CYB</name>
    <name type="synonym">COB</name>
    <name type="synonym">CYTB</name>
    <name type="synonym">MTCYB</name>
</gene>
<comment type="function">
    <text evidence="2">Component of the ubiquinol-cytochrome c reductase complex (complex III or cytochrome b-c1 complex) that is part of the mitochondrial respiratory chain. The b-c1 complex mediates electron transfer from ubiquinol to cytochrome c. Contributes to the generation of a proton gradient across the mitochondrial membrane that is then used for ATP synthesis.</text>
</comment>
<comment type="cofactor">
    <cofactor evidence="2">
        <name>heme b</name>
        <dbReference type="ChEBI" id="CHEBI:60344"/>
    </cofactor>
    <text evidence="2">Binds 2 heme b groups non-covalently.</text>
</comment>
<comment type="subunit">
    <text evidence="2">The cytochrome bc1 complex contains 11 subunits: 3 respiratory subunits (MT-CYB, CYC1 and UQCRFS1), 2 core proteins (UQCRC1 and UQCRC2) and 6 low-molecular weight proteins (UQCRH/QCR6, UQCRB/QCR7, UQCRQ/QCR8, UQCR10/QCR9, UQCR11/QCR10 and a cleavage product of UQCRFS1). This cytochrome bc1 complex then forms a dimer.</text>
</comment>
<comment type="subcellular location">
    <subcellularLocation>
        <location evidence="2">Mitochondrion inner membrane</location>
        <topology evidence="2">Multi-pass membrane protein</topology>
    </subcellularLocation>
</comment>
<comment type="miscellaneous">
    <text evidence="1">Heme 1 (or BL or b562) is low-potential and absorbs at about 562 nm, and heme 2 (or BH or b566) is high-potential and absorbs at about 566 nm.</text>
</comment>
<comment type="similarity">
    <text evidence="3 4">Belongs to the cytochrome b family.</text>
</comment>
<comment type="caution">
    <text evidence="2">The full-length protein contains only eight transmembrane helices, not nine as predicted by bioinformatics tools.</text>
</comment>
<accession>P50663</accession>
<accession>F1JUN3</accession>
<name>CYB_MELGA</name>
<geneLocation type="mitochondrion"/>
<dbReference type="EMBL" id="L08381">
    <property type="protein sequence ID" value="AAA18852.1"/>
    <property type="molecule type" value="Genomic_DNA"/>
</dbReference>
<dbReference type="EMBL" id="JF275060">
    <property type="protein sequence ID" value="ADX43875.1"/>
    <property type="molecule type" value="Genomic_DNA"/>
</dbReference>
<dbReference type="PIR" id="I51374">
    <property type="entry name" value="I51374"/>
</dbReference>
<dbReference type="RefSeq" id="YP_004243719.1">
    <property type="nucleotide sequence ID" value="NC_010195.2"/>
</dbReference>
<dbReference type="SMR" id="P50663"/>
<dbReference type="FunCoup" id="P50663">
    <property type="interactions" value="11"/>
</dbReference>
<dbReference type="STRING" id="9103.ENSMGAP00000019846"/>
<dbReference type="Ensembl" id="ENSMGAT00000021033.1">
    <property type="protein sequence ID" value="ENSMGAP00000019846.1"/>
    <property type="gene ID" value="ENSMGAG00000017488.1"/>
</dbReference>
<dbReference type="GeneID" id="5848005"/>
<dbReference type="KEGG" id="mgp:5848005"/>
<dbReference type="CTD" id="4519"/>
<dbReference type="GeneTree" id="ENSGT00390000017948"/>
<dbReference type="InParanoid" id="P50663"/>
<dbReference type="OMA" id="NISAWWN"/>
<dbReference type="OrthoDB" id="11044at1549675"/>
<dbReference type="TreeFam" id="TF353088"/>
<dbReference type="Proteomes" id="UP000001645">
    <property type="component" value="Mitochondrion"/>
</dbReference>
<dbReference type="Bgee" id="ENSMGAG00000017488">
    <property type="expression patterns" value="Expressed in heart and 17 other cell types or tissues"/>
</dbReference>
<dbReference type="GO" id="GO:0005743">
    <property type="term" value="C:mitochondrial inner membrane"/>
    <property type="evidence" value="ECO:0007669"/>
    <property type="project" value="UniProtKB-SubCell"/>
</dbReference>
<dbReference type="GO" id="GO:0045275">
    <property type="term" value="C:respiratory chain complex III"/>
    <property type="evidence" value="ECO:0007669"/>
    <property type="project" value="Ensembl"/>
</dbReference>
<dbReference type="GO" id="GO:0046872">
    <property type="term" value="F:metal ion binding"/>
    <property type="evidence" value="ECO:0007669"/>
    <property type="project" value="UniProtKB-KW"/>
</dbReference>
<dbReference type="GO" id="GO:0008121">
    <property type="term" value="F:ubiquinol-cytochrome-c reductase activity"/>
    <property type="evidence" value="ECO:0007669"/>
    <property type="project" value="InterPro"/>
</dbReference>
<dbReference type="GO" id="GO:0006122">
    <property type="term" value="P:mitochondrial electron transport, ubiquinol to cytochrome c"/>
    <property type="evidence" value="ECO:0007669"/>
    <property type="project" value="TreeGrafter"/>
</dbReference>
<dbReference type="CDD" id="cd00290">
    <property type="entry name" value="cytochrome_b_C"/>
    <property type="match status" value="1"/>
</dbReference>
<dbReference type="CDD" id="cd00284">
    <property type="entry name" value="Cytochrome_b_N"/>
    <property type="match status" value="1"/>
</dbReference>
<dbReference type="FunFam" id="1.20.810.10:FF:000002">
    <property type="entry name" value="Cytochrome b"/>
    <property type="match status" value="1"/>
</dbReference>
<dbReference type="Gene3D" id="1.20.810.10">
    <property type="entry name" value="Cytochrome Bc1 Complex, Chain C"/>
    <property type="match status" value="1"/>
</dbReference>
<dbReference type="InterPro" id="IPR005798">
    <property type="entry name" value="Cyt_b/b6_C"/>
</dbReference>
<dbReference type="InterPro" id="IPR036150">
    <property type="entry name" value="Cyt_b/b6_C_sf"/>
</dbReference>
<dbReference type="InterPro" id="IPR005797">
    <property type="entry name" value="Cyt_b/b6_N"/>
</dbReference>
<dbReference type="InterPro" id="IPR027387">
    <property type="entry name" value="Cytb/b6-like_sf"/>
</dbReference>
<dbReference type="InterPro" id="IPR030689">
    <property type="entry name" value="Cytochrome_b"/>
</dbReference>
<dbReference type="InterPro" id="IPR048260">
    <property type="entry name" value="Cytochrome_b_C_euk/bac"/>
</dbReference>
<dbReference type="InterPro" id="IPR048259">
    <property type="entry name" value="Cytochrome_b_N_euk/bac"/>
</dbReference>
<dbReference type="InterPro" id="IPR016174">
    <property type="entry name" value="Di-haem_cyt_TM"/>
</dbReference>
<dbReference type="PANTHER" id="PTHR19271">
    <property type="entry name" value="CYTOCHROME B"/>
    <property type="match status" value="1"/>
</dbReference>
<dbReference type="PANTHER" id="PTHR19271:SF16">
    <property type="entry name" value="CYTOCHROME B"/>
    <property type="match status" value="1"/>
</dbReference>
<dbReference type="Pfam" id="PF00032">
    <property type="entry name" value="Cytochrom_B_C"/>
    <property type="match status" value="1"/>
</dbReference>
<dbReference type="Pfam" id="PF00033">
    <property type="entry name" value="Cytochrome_B"/>
    <property type="match status" value="1"/>
</dbReference>
<dbReference type="PIRSF" id="PIRSF038885">
    <property type="entry name" value="COB"/>
    <property type="match status" value="1"/>
</dbReference>
<dbReference type="SUPFAM" id="SSF81648">
    <property type="entry name" value="a domain/subunit of cytochrome bc1 complex (Ubiquinol-cytochrome c reductase)"/>
    <property type="match status" value="1"/>
</dbReference>
<dbReference type="SUPFAM" id="SSF81342">
    <property type="entry name" value="Transmembrane di-heme cytochromes"/>
    <property type="match status" value="1"/>
</dbReference>
<dbReference type="PROSITE" id="PS51003">
    <property type="entry name" value="CYTB_CTER"/>
    <property type="match status" value="1"/>
</dbReference>
<dbReference type="PROSITE" id="PS51002">
    <property type="entry name" value="CYTB_NTER"/>
    <property type="match status" value="1"/>
</dbReference>
<keyword id="KW-0249">Electron transport</keyword>
<keyword id="KW-0349">Heme</keyword>
<keyword id="KW-0408">Iron</keyword>
<keyword id="KW-0472">Membrane</keyword>
<keyword id="KW-0479">Metal-binding</keyword>
<keyword id="KW-0496">Mitochondrion</keyword>
<keyword id="KW-0999">Mitochondrion inner membrane</keyword>
<keyword id="KW-1185">Reference proteome</keyword>
<keyword id="KW-0679">Respiratory chain</keyword>
<keyword id="KW-0812">Transmembrane</keyword>
<keyword id="KW-1133">Transmembrane helix</keyword>
<keyword id="KW-0813">Transport</keyword>
<keyword id="KW-0830">Ubiquinone</keyword>
<feature type="chain" id="PRO_0000061168" description="Cytochrome b">
    <location>
        <begin position="1"/>
        <end position="380"/>
    </location>
</feature>
<feature type="transmembrane region" description="Helical" evidence="2">
    <location>
        <begin position="34"/>
        <end position="54"/>
    </location>
</feature>
<feature type="transmembrane region" description="Helical" evidence="2">
    <location>
        <begin position="78"/>
        <end position="99"/>
    </location>
</feature>
<feature type="transmembrane region" description="Helical" evidence="2">
    <location>
        <begin position="114"/>
        <end position="134"/>
    </location>
</feature>
<feature type="transmembrane region" description="Helical" evidence="2">
    <location>
        <begin position="179"/>
        <end position="199"/>
    </location>
</feature>
<feature type="transmembrane region" description="Helical" evidence="2">
    <location>
        <begin position="227"/>
        <end position="247"/>
    </location>
</feature>
<feature type="transmembrane region" description="Helical" evidence="2">
    <location>
        <begin position="289"/>
        <end position="309"/>
    </location>
</feature>
<feature type="transmembrane region" description="Helical" evidence="2">
    <location>
        <begin position="321"/>
        <end position="341"/>
    </location>
</feature>
<feature type="transmembrane region" description="Helical" evidence="2">
    <location>
        <begin position="348"/>
        <end position="368"/>
    </location>
</feature>
<feature type="binding site" description="axial binding residue" evidence="2">
    <location>
        <position position="84"/>
    </location>
    <ligand>
        <name>heme b</name>
        <dbReference type="ChEBI" id="CHEBI:60344"/>
        <label>b562</label>
    </ligand>
    <ligandPart>
        <name>Fe</name>
        <dbReference type="ChEBI" id="CHEBI:18248"/>
    </ligandPart>
</feature>
<feature type="binding site" description="axial binding residue" evidence="2">
    <location>
        <position position="98"/>
    </location>
    <ligand>
        <name>heme b</name>
        <dbReference type="ChEBI" id="CHEBI:60344"/>
        <label>b566</label>
    </ligand>
    <ligandPart>
        <name>Fe</name>
        <dbReference type="ChEBI" id="CHEBI:18248"/>
    </ligandPart>
</feature>
<feature type="binding site" description="axial binding residue" evidence="2">
    <location>
        <position position="183"/>
    </location>
    <ligand>
        <name>heme b</name>
        <dbReference type="ChEBI" id="CHEBI:60344"/>
        <label>b562</label>
    </ligand>
    <ligandPart>
        <name>Fe</name>
        <dbReference type="ChEBI" id="CHEBI:18248"/>
    </ligandPart>
</feature>
<feature type="binding site" description="axial binding residue" evidence="2">
    <location>
        <position position="197"/>
    </location>
    <ligand>
        <name>heme b</name>
        <dbReference type="ChEBI" id="CHEBI:60344"/>
        <label>b566</label>
    </ligand>
    <ligandPart>
        <name>Fe</name>
        <dbReference type="ChEBI" id="CHEBI:18248"/>
    </ligandPart>
</feature>
<feature type="binding site" evidence="2">
    <location>
        <position position="202"/>
    </location>
    <ligand>
        <name>a ubiquinone</name>
        <dbReference type="ChEBI" id="CHEBI:16389"/>
    </ligand>
</feature>
<feature type="sequence conflict" description="In Ref. 1; AAA18852." ref="1">
    <original>S</original>
    <variation>W</variation>
    <location>
        <position position="8"/>
    </location>
</feature>
<feature type="sequence conflict" description="In Ref. 1; AAA18852." ref="1">
    <original>M</original>
    <variation>V</variation>
    <location>
        <position position="189"/>
    </location>
</feature>
<organism>
    <name type="scientific">Meleagris gallopavo</name>
    <name type="common">Wild turkey</name>
    <dbReference type="NCBI Taxonomy" id="9103"/>
    <lineage>
        <taxon>Eukaryota</taxon>
        <taxon>Metazoa</taxon>
        <taxon>Chordata</taxon>
        <taxon>Craniata</taxon>
        <taxon>Vertebrata</taxon>
        <taxon>Euteleostomi</taxon>
        <taxon>Archelosauria</taxon>
        <taxon>Archosauria</taxon>
        <taxon>Dinosauria</taxon>
        <taxon>Saurischia</taxon>
        <taxon>Theropoda</taxon>
        <taxon>Coelurosauria</taxon>
        <taxon>Aves</taxon>
        <taxon>Neognathae</taxon>
        <taxon>Galloanserae</taxon>
        <taxon>Galliformes</taxon>
        <taxon>Phasianidae</taxon>
        <taxon>Meleagridinae</taxon>
        <taxon>Meleagris</taxon>
    </lineage>
</organism>
<reference key="1">
    <citation type="journal article" date="1993" name="J. Mol. Evol.">
        <title>Pathways of lysozyme evolution inferred from the sequences of cytochrome b in birds.</title>
        <authorList>
            <person name="Kornegay J.R."/>
            <person name="Kocher T.D."/>
            <person name="Williams L.A."/>
            <person name="Wilson A.C."/>
        </authorList>
    </citation>
    <scope>NUCLEOTIDE SEQUENCE [GENOMIC DNA]</scope>
    <source>
        <tissue>Liver</tissue>
    </source>
</reference>
<reference key="2">
    <citation type="journal article" date="2009" name="Anim. Genet.">
        <title>The mitochondrial genome sequence and molecular phylogeny of the turkey, Meleagris gallopavo.</title>
        <authorList>
            <person name="Guan X."/>
            <person name="Silva P."/>
            <person name="Gyenai K.B."/>
            <person name="Xu J."/>
            <person name="Geng T."/>
            <person name="Tu Z."/>
            <person name="Samuels D.C."/>
            <person name="Smith E.J."/>
        </authorList>
    </citation>
    <scope>NUCLEOTIDE SEQUENCE [LARGE SCALE GENOMIC DNA]</scope>
</reference>
<sequence length="380" mass="42461">MAPNIRKSHPLLKTINNSLIDLPTPSNISAWWNFGSLLAVCLITQILTGLLLAMHYTADTTLAFSSVAYTCRNVQYGWLLHNLHANGASFFFICIFLHIGRGLYYGSYLYKETWNTGVVLLLTLMATAFVGYVLPWGQMSFWGATVITNLFSAIPYIGQTLVEWAWGGFSVDNPTLTRFFALHFLLPFMIAGITIIHLMFLHESGSNNPLGISSNADKIPFHPYYSIKDILGLTIMLTPLLTLTLFSPNLLGDPENFTPANPLVTPPHIKPEWYFLFAYAILRSIPNKLGGVLALAASVLILLLIPFLHKSKQRAMTFRPLSQTLFWLLVANLLILTWVGSQPVEHPFIIIGQMASLSYFTILLILFPLIGALENKMLNL</sequence>